<sequence>MAETTKTHVILLACGSFNPITKGHIQMFERARDYLHKTGKFIVIGGIISPVHDSYGKQGLVSSRHRLNMCQLAVQNSDWIRVDPWECYQDTWQTTCSVLEHHRDLMKRVTGCILSNVNTPSVTPVIGQSLNQSTQPVYQNSNLSNKPTAVRILGKVGEGLSRMCCVRPNLQRVTFVDENANLGTVMRYEEIELRILLLCGSDLLESFCIPGLWNESDMEVIVGDFGIVVVPRDSVEPEQIINHSSLLRKYKNNILTVKDDSNHPMAVVSSTKSRLALQHGDGHVVDYLAQPVIDYVLKSQLYINTSG</sequence>
<feature type="chain" id="PRO_0000328664" description="Nicotinamide/nicotinic acid mononucleotide adenylyltransferase 2">
    <location>
        <begin position="1"/>
        <end position="307"/>
    </location>
</feature>
<feature type="binding site" evidence="2">
    <location>
        <position position="16"/>
    </location>
    <ligand>
        <name>NAD(+)</name>
        <dbReference type="ChEBI" id="CHEBI:57540"/>
    </ligand>
</feature>
<feature type="binding site" evidence="2">
    <location>
        <position position="17"/>
    </location>
    <ligand>
        <name>NAD(+)</name>
        <dbReference type="ChEBI" id="CHEBI:57540"/>
    </ligand>
</feature>
<feature type="binding site" description="in other chain" evidence="2">
    <location>
        <position position="24"/>
    </location>
    <ligand>
        <name>ATP</name>
        <dbReference type="ChEBI" id="CHEBI:30616"/>
        <note>ligand shared between dimeric partners</note>
    </ligand>
</feature>
<feature type="binding site" evidence="2">
    <location>
        <position position="92"/>
    </location>
    <ligand>
        <name>NAD(+)</name>
        <dbReference type="ChEBI" id="CHEBI:57540"/>
    </ligand>
</feature>
<feature type="binding site" evidence="2">
    <location>
        <position position="95"/>
    </location>
    <ligand>
        <name>NAD(+)</name>
        <dbReference type="ChEBI" id="CHEBI:57540"/>
    </ligand>
</feature>
<feature type="binding site" evidence="2">
    <location>
        <position position="200"/>
    </location>
    <ligand>
        <name>NAD(+)</name>
        <dbReference type="ChEBI" id="CHEBI:57540"/>
    </ligand>
</feature>
<feature type="binding site" evidence="2">
    <location>
        <position position="202"/>
    </location>
    <ligand>
        <name>NAD(+)</name>
        <dbReference type="ChEBI" id="CHEBI:57540"/>
    </ligand>
</feature>
<feature type="binding site" evidence="2">
    <location>
        <position position="212"/>
    </location>
    <ligand>
        <name>NAD(+)</name>
        <dbReference type="ChEBI" id="CHEBI:57540"/>
    </ligand>
</feature>
<feature type="binding site" evidence="2">
    <location>
        <position position="213"/>
    </location>
    <ligand>
        <name>NAD(+)</name>
        <dbReference type="ChEBI" id="CHEBI:57540"/>
    </ligand>
</feature>
<feature type="binding site" evidence="2">
    <location>
        <position position="232"/>
    </location>
    <ligand>
        <name>NAD(+)</name>
        <dbReference type="ChEBI" id="CHEBI:57540"/>
    </ligand>
</feature>
<feature type="binding site" description="in other chain" evidence="2">
    <location>
        <begin position="271"/>
        <end position="274"/>
    </location>
    <ligand>
        <name>ATP</name>
        <dbReference type="ChEBI" id="CHEBI:30616"/>
        <note>ligand shared between dimeric partners</note>
    </ligand>
</feature>
<accession>A4IH61</accession>
<keyword id="KW-0067">ATP-binding</keyword>
<keyword id="KW-0966">Cell projection</keyword>
<keyword id="KW-0963">Cytoplasm</keyword>
<keyword id="KW-0968">Cytoplasmic vesicle</keyword>
<keyword id="KW-0333">Golgi apparatus</keyword>
<keyword id="KW-0449">Lipoprotein</keyword>
<keyword id="KW-0472">Membrane</keyword>
<keyword id="KW-0520">NAD</keyword>
<keyword id="KW-0547">Nucleotide-binding</keyword>
<keyword id="KW-0548">Nucleotidyltransferase</keyword>
<keyword id="KW-0662">Pyridine nucleotide biosynthesis</keyword>
<keyword id="KW-1185">Reference proteome</keyword>
<keyword id="KW-0808">Transferase</keyword>
<comment type="function">
    <text evidence="1 3">Nicotinamide/nicotinate-nucleotide adenylyltransferase that acts as an axon maintenance factor. Axon survival factor required for the maintenance of healthy axons: acts by delaying Wallerian axon degeneration, an evolutionarily conserved process that drives the loss of damaged axons. Catalyzes the formation of NAD(+) from nicotinamide mononucleotide (NMN) and ATP. Can also use the deamidated form; nicotinic acid mononucleotide (NaMN) as substrate but with a lower efficiency. Also catalyzes the reverse reaction, i.e. the pyrophosphorolytic cleavage of NAD(+). For the pyrophosphorolytic activity prefers NAD(+), NADH and NaAD as substrates and degrades nicotinic acid adenine dinucleotide phosphate (NHD) less effectively. Also acts as an activator of ADP-ribosylation by supporting the catalytic activity of PARP16 and promoting mono-ADP-ribosylation of ribosomes by PARP16. May be involved in the maintenance of axonal integrity (By similarity).</text>
</comment>
<comment type="catalytic activity">
    <reaction evidence="3">
        <text>beta-nicotinamide D-ribonucleotide + ATP + H(+) = diphosphate + NAD(+)</text>
        <dbReference type="Rhea" id="RHEA:21360"/>
        <dbReference type="ChEBI" id="CHEBI:14649"/>
        <dbReference type="ChEBI" id="CHEBI:15378"/>
        <dbReference type="ChEBI" id="CHEBI:30616"/>
        <dbReference type="ChEBI" id="CHEBI:33019"/>
        <dbReference type="ChEBI" id="CHEBI:57540"/>
        <dbReference type="EC" id="2.7.7.1"/>
    </reaction>
    <physiologicalReaction direction="left-to-right" evidence="3">
        <dbReference type="Rhea" id="RHEA:21361"/>
    </physiologicalReaction>
    <physiologicalReaction direction="right-to-left" evidence="3">
        <dbReference type="Rhea" id="RHEA:21362"/>
    </physiologicalReaction>
</comment>
<comment type="catalytic activity">
    <reaction evidence="3">
        <text>nicotinate beta-D-ribonucleotide + ATP + H(+) = deamido-NAD(+) + diphosphate</text>
        <dbReference type="Rhea" id="RHEA:22860"/>
        <dbReference type="ChEBI" id="CHEBI:15378"/>
        <dbReference type="ChEBI" id="CHEBI:30616"/>
        <dbReference type="ChEBI" id="CHEBI:33019"/>
        <dbReference type="ChEBI" id="CHEBI:57502"/>
        <dbReference type="ChEBI" id="CHEBI:58437"/>
        <dbReference type="EC" id="2.7.7.18"/>
    </reaction>
    <physiologicalReaction direction="left-to-right" evidence="3">
        <dbReference type="Rhea" id="RHEA:22861"/>
    </physiologicalReaction>
    <physiologicalReaction direction="right-to-left" evidence="3">
        <dbReference type="Rhea" id="RHEA:22862"/>
    </physiologicalReaction>
</comment>
<comment type="cofactor">
    <cofactor evidence="3">
        <name>Mg(2+)</name>
        <dbReference type="ChEBI" id="CHEBI:18420"/>
    </cofactor>
    <text evidence="3">Divalent metal cations. Mg(2+) confers the highest activity.</text>
</comment>
<comment type="pathway">
    <text evidence="3">Cofactor biosynthesis; NAD(+) biosynthesis; NAD(+) from nicotinamide D-ribonucleotide: step 1/1.</text>
</comment>
<comment type="pathway">
    <text evidence="3">Cofactor biosynthesis; NAD(+) biosynthesis; deamido-NAD(+) from nicotinate D-ribonucleotide: step 1/1.</text>
</comment>
<comment type="subunit">
    <text evidence="3">Monomer.</text>
</comment>
<comment type="subcellular location">
    <subcellularLocation>
        <location evidence="1">Golgi apparatus membrane</location>
        <topology evidence="1">Lipid-anchor</topology>
    </subcellularLocation>
    <subcellularLocation>
        <location evidence="1">Cytoplasmic vesicle membrane</location>
        <topology evidence="1">Lipid-anchor</topology>
    </subcellularLocation>
    <subcellularLocation>
        <location evidence="3">Cytoplasm</location>
    </subcellularLocation>
    <subcellularLocation>
        <location evidence="1">Cell projection</location>
        <location evidence="1">Axon</location>
    </subcellularLocation>
    <text evidence="1">Delivered to axons with Golgi-derived cytoplasmic vesicles.</text>
</comment>
<comment type="similarity">
    <text evidence="4">Belongs to the eukaryotic NMN adenylyltransferase family.</text>
</comment>
<evidence type="ECO:0000250" key="1">
    <source>
        <dbReference type="UniProtKB" id="Q8BNJ3"/>
    </source>
</evidence>
<evidence type="ECO:0000250" key="2">
    <source>
        <dbReference type="UniProtKB" id="Q96T66"/>
    </source>
</evidence>
<evidence type="ECO:0000250" key="3">
    <source>
        <dbReference type="UniProtKB" id="Q9BZQ4"/>
    </source>
</evidence>
<evidence type="ECO:0000305" key="4"/>
<organism>
    <name type="scientific">Xenopus tropicalis</name>
    <name type="common">Western clawed frog</name>
    <name type="synonym">Silurana tropicalis</name>
    <dbReference type="NCBI Taxonomy" id="8364"/>
    <lineage>
        <taxon>Eukaryota</taxon>
        <taxon>Metazoa</taxon>
        <taxon>Chordata</taxon>
        <taxon>Craniata</taxon>
        <taxon>Vertebrata</taxon>
        <taxon>Euteleostomi</taxon>
        <taxon>Amphibia</taxon>
        <taxon>Batrachia</taxon>
        <taxon>Anura</taxon>
        <taxon>Pipoidea</taxon>
        <taxon>Pipidae</taxon>
        <taxon>Xenopodinae</taxon>
        <taxon>Xenopus</taxon>
        <taxon>Silurana</taxon>
    </lineage>
</organism>
<dbReference type="EC" id="2.7.7.1" evidence="3"/>
<dbReference type="EC" id="2.7.7.18" evidence="3"/>
<dbReference type="EMBL" id="BC135388">
    <property type="protein sequence ID" value="AAI35389.1"/>
    <property type="molecule type" value="mRNA"/>
</dbReference>
<dbReference type="RefSeq" id="NP_001096243.1">
    <property type="nucleotide sequence ID" value="NM_001102773.1"/>
</dbReference>
<dbReference type="SMR" id="A4IH61"/>
<dbReference type="FunCoup" id="A4IH61">
    <property type="interactions" value="242"/>
</dbReference>
<dbReference type="STRING" id="8364.ENSXETP00000011433"/>
<dbReference type="PaxDb" id="8364-ENSXETP00000027403"/>
<dbReference type="DNASU" id="100124800"/>
<dbReference type="GeneID" id="100124800"/>
<dbReference type="KEGG" id="xtr:100124800"/>
<dbReference type="AGR" id="Xenbase:XB-GENE-945256"/>
<dbReference type="CTD" id="23057"/>
<dbReference type="eggNOG" id="KOG3199">
    <property type="taxonomic scope" value="Eukaryota"/>
</dbReference>
<dbReference type="HOGENOM" id="CLU_033366_1_0_1"/>
<dbReference type="InParanoid" id="A4IH61"/>
<dbReference type="OMA" id="QPWKENI"/>
<dbReference type="OrthoDB" id="422187at2759"/>
<dbReference type="PhylomeDB" id="A4IH61"/>
<dbReference type="TreeFam" id="TF315035"/>
<dbReference type="UniPathway" id="UPA00253">
    <property type="reaction ID" value="UER00332"/>
</dbReference>
<dbReference type="UniPathway" id="UPA00253">
    <property type="reaction ID" value="UER00600"/>
</dbReference>
<dbReference type="Proteomes" id="UP000008143">
    <property type="component" value="Chromosome 4"/>
</dbReference>
<dbReference type="Bgee" id="ENSXETG00000012527">
    <property type="expression patterns" value="Expressed in brain and 6 other cell types or tissues"/>
</dbReference>
<dbReference type="GO" id="GO:0030424">
    <property type="term" value="C:axon"/>
    <property type="evidence" value="ECO:0007669"/>
    <property type="project" value="UniProtKB-SubCell"/>
</dbReference>
<dbReference type="GO" id="GO:0030659">
    <property type="term" value="C:cytoplasmic vesicle membrane"/>
    <property type="evidence" value="ECO:0007669"/>
    <property type="project" value="UniProtKB-SubCell"/>
</dbReference>
<dbReference type="GO" id="GO:0000139">
    <property type="term" value="C:Golgi membrane"/>
    <property type="evidence" value="ECO:0007669"/>
    <property type="project" value="UniProtKB-SubCell"/>
</dbReference>
<dbReference type="GO" id="GO:0005524">
    <property type="term" value="F:ATP binding"/>
    <property type="evidence" value="ECO:0007669"/>
    <property type="project" value="UniProtKB-KW"/>
</dbReference>
<dbReference type="GO" id="GO:0000309">
    <property type="term" value="F:nicotinamide-nucleotide adenylyltransferase activity"/>
    <property type="evidence" value="ECO:0007669"/>
    <property type="project" value="UniProtKB-EC"/>
</dbReference>
<dbReference type="GO" id="GO:0004515">
    <property type="term" value="F:nicotinate-nucleotide adenylyltransferase activity"/>
    <property type="evidence" value="ECO:0007669"/>
    <property type="project" value="UniProtKB-EC"/>
</dbReference>
<dbReference type="GO" id="GO:0140768">
    <property type="term" value="F:protein ADP-ribosyltransferase-substrate adaptor activity"/>
    <property type="evidence" value="ECO:0000250"/>
    <property type="project" value="UniProtKB"/>
</dbReference>
<dbReference type="GO" id="GO:0009435">
    <property type="term" value="P:NAD biosynthetic process"/>
    <property type="evidence" value="ECO:0007669"/>
    <property type="project" value="UniProtKB-UniPathway"/>
</dbReference>
<dbReference type="CDD" id="cd09286">
    <property type="entry name" value="NMNAT_Eukarya"/>
    <property type="match status" value="1"/>
</dbReference>
<dbReference type="FunFam" id="3.40.50.620:FF:000080">
    <property type="entry name" value="Nicotinamide/nicotinic acid mononucleotide adenylyltransferase 2"/>
    <property type="match status" value="1"/>
</dbReference>
<dbReference type="Gene3D" id="3.40.50.620">
    <property type="entry name" value="HUPs"/>
    <property type="match status" value="1"/>
</dbReference>
<dbReference type="InterPro" id="IPR004821">
    <property type="entry name" value="Cyt_trans-like"/>
</dbReference>
<dbReference type="InterPro" id="IPR051182">
    <property type="entry name" value="Euk_NMN_adenylyltrnsfrase"/>
</dbReference>
<dbReference type="InterPro" id="IPR045094">
    <property type="entry name" value="NMNAT_euk"/>
</dbReference>
<dbReference type="InterPro" id="IPR014729">
    <property type="entry name" value="Rossmann-like_a/b/a_fold"/>
</dbReference>
<dbReference type="PANTHER" id="PTHR12039">
    <property type="entry name" value="NICOTINAMIDE MONONUCLEOTIDE ADENYLYLTRANSFERASE"/>
    <property type="match status" value="1"/>
</dbReference>
<dbReference type="PANTHER" id="PTHR12039:SF18">
    <property type="entry name" value="NICOTINAMIDE_NICOTINIC ACID MONONUCLEOTIDE ADENYLYLTRANSFERASE 2"/>
    <property type="match status" value="1"/>
</dbReference>
<dbReference type="Pfam" id="PF01467">
    <property type="entry name" value="CTP_transf_like"/>
    <property type="match status" value="1"/>
</dbReference>
<dbReference type="SUPFAM" id="SSF52374">
    <property type="entry name" value="Nucleotidylyl transferase"/>
    <property type="match status" value="1"/>
</dbReference>
<name>NMNA2_XENTR</name>
<proteinExistence type="evidence at transcript level"/>
<protein>
    <recommendedName>
        <fullName evidence="4">Nicotinamide/nicotinic acid mononucleotide adenylyltransferase 2</fullName>
        <shortName>NMN/NaMN adenylyltransferase 2</shortName>
        <ecNumber evidence="3">2.7.7.1</ecNumber>
        <ecNumber evidence="3">2.7.7.18</ecNumber>
    </recommendedName>
    <alternativeName>
        <fullName>Nicotinamide mononucleotide adenylyltransferase 2</fullName>
        <shortName>NMN adenylyltransferase 2</shortName>
    </alternativeName>
    <alternativeName>
        <fullName>Nicotinate-nucleotide adenylyltransferase 2</fullName>
        <shortName>NaMN adenylyltransferase 2</shortName>
    </alternativeName>
</protein>
<reference key="1">
    <citation type="submission" date="2007-03" db="EMBL/GenBank/DDBJ databases">
        <authorList>
            <consortium name="NIH - Xenopus Gene Collection (XGC) project"/>
        </authorList>
    </citation>
    <scope>NUCLEOTIDE SEQUENCE [LARGE SCALE MRNA]</scope>
    <source>
        <tissue>Embryo</tissue>
    </source>
</reference>
<gene>
    <name type="primary">nmnat2</name>
</gene>